<gene>
    <name evidence="6 9" type="primary">or131-2</name>
</gene>
<keyword id="KW-1003">Cell membrane</keyword>
<keyword id="KW-0963">Cytoplasm</keyword>
<keyword id="KW-1015">Disulfide bond</keyword>
<keyword id="KW-0297">G-protein coupled receptor</keyword>
<keyword id="KW-0325">Glycoprotein</keyword>
<keyword id="KW-0472">Membrane</keyword>
<keyword id="KW-0552">Olfaction</keyword>
<keyword id="KW-0675">Receptor</keyword>
<keyword id="KW-1185">Reference proteome</keyword>
<keyword id="KW-0716">Sensory transduction</keyword>
<keyword id="KW-0807">Transducer</keyword>
<keyword id="KW-0812">Transmembrane</keyword>
<keyword id="KW-1133">Transmembrane helix</keyword>
<accession>B3DH96</accession>
<accession>Q2PRB1</accession>
<comment type="function">
    <text evidence="5">Probable olfactory receptor.</text>
</comment>
<comment type="subunit">
    <text evidence="4">Homodimer. Monomer.</text>
</comment>
<comment type="subcellular location">
    <subcellularLocation>
        <location evidence="4">Cell membrane</location>
        <topology evidence="1">Multi-pass membrane protein</topology>
    </subcellularLocation>
    <subcellularLocation>
        <location evidence="4">Cytoplasm</location>
    </subcellularLocation>
    <text evidence="4">Mainly found at the plasma membrane. Also shows punctate cytoplasmic expression.</text>
</comment>
<comment type="similarity">
    <text evidence="3">Belongs to the G-protein coupled receptor 1 family.</text>
</comment>
<proteinExistence type="evidence at protein level"/>
<evidence type="ECO:0000255" key="1"/>
<evidence type="ECO:0000255" key="2">
    <source>
        <dbReference type="PROSITE-ProRule" id="PRU00498"/>
    </source>
</evidence>
<evidence type="ECO:0000255" key="3">
    <source>
        <dbReference type="PROSITE-ProRule" id="PRU00521"/>
    </source>
</evidence>
<evidence type="ECO:0000269" key="4">
    <source>
    </source>
</evidence>
<evidence type="ECO:0000305" key="5"/>
<evidence type="ECO:0000312" key="6">
    <source>
        <dbReference type="EMBL" id="AAI62686.1"/>
    </source>
</evidence>
<evidence type="ECO:0000312" key="7">
    <source>
        <dbReference type="EMBL" id="ABC43356.1"/>
    </source>
</evidence>
<evidence type="ECO:0000312" key="8">
    <source>
        <dbReference type="Proteomes" id="UP000000437"/>
    </source>
</evidence>
<evidence type="ECO:0000312" key="9">
    <source>
        <dbReference type="ZFIN" id="ZDB-GENE-070806-46"/>
    </source>
</evidence>
<reference evidence="7" key="1">
    <citation type="journal article" date="2006" name="BMC Genomics">
        <title>The odorant receptor repertoire of teleost fish.</title>
        <authorList>
            <person name="Alioto T.S."/>
            <person name="Ngai J."/>
        </authorList>
    </citation>
    <scope>NUCLEOTIDE SEQUENCE [GENOMIC DNA]</scope>
</reference>
<reference evidence="8" key="2">
    <citation type="journal article" date="2013" name="Nature">
        <title>The zebrafish reference genome sequence and its relationship to the human genome.</title>
        <authorList>
            <person name="Howe K."/>
            <person name="Clark M.D."/>
            <person name="Torroja C.F."/>
            <person name="Torrance J."/>
            <person name="Berthelot C."/>
            <person name="Muffato M."/>
            <person name="Collins J.E."/>
            <person name="Humphray S."/>
            <person name="McLaren K."/>
            <person name="Matthews L."/>
            <person name="McLaren S."/>
            <person name="Sealy I."/>
            <person name="Caccamo M."/>
            <person name="Churcher C."/>
            <person name="Scott C."/>
            <person name="Barrett J.C."/>
            <person name="Koch R."/>
            <person name="Rauch G.J."/>
            <person name="White S."/>
            <person name="Chow W."/>
            <person name="Kilian B."/>
            <person name="Quintais L.T."/>
            <person name="Guerra-Assuncao J.A."/>
            <person name="Zhou Y."/>
            <person name="Gu Y."/>
            <person name="Yen J."/>
            <person name="Vogel J.H."/>
            <person name="Eyre T."/>
            <person name="Redmond S."/>
            <person name="Banerjee R."/>
            <person name="Chi J."/>
            <person name="Fu B."/>
            <person name="Langley E."/>
            <person name="Maguire S.F."/>
            <person name="Laird G.K."/>
            <person name="Lloyd D."/>
            <person name="Kenyon E."/>
            <person name="Donaldson S."/>
            <person name="Sehra H."/>
            <person name="Almeida-King J."/>
            <person name="Loveland J."/>
            <person name="Trevanion S."/>
            <person name="Jones M."/>
            <person name="Quail M."/>
            <person name="Willey D."/>
            <person name="Hunt A."/>
            <person name="Burton J."/>
            <person name="Sims S."/>
            <person name="McLay K."/>
            <person name="Plumb B."/>
            <person name="Davis J."/>
            <person name="Clee C."/>
            <person name="Oliver K."/>
            <person name="Clark R."/>
            <person name="Riddle C."/>
            <person name="Elliot D."/>
            <person name="Threadgold G."/>
            <person name="Harden G."/>
            <person name="Ware D."/>
            <person name="Begum S."/>
            <person name="Mortimore B."/>
            <person name="Kerry G."/>
            <person name="Heath P."/>
            <person name="Phillimore B."/>
            <person name="Tracey A."/>
            <person name="Corby N."/>
            <person name="Dunn M."/>
            <person name="Johnson C."/>
            <person name="Wood J."/>
            <person name="Clark S."/>
            <person name="Pelan S."/>
            <person name="Griffiths G."/>
            <person name="Smith M."/>
            <person name="Glithero R."/>
            <person name="Howden P."/>
            <person name="Barker N."/>
            <person name="Lloyd C."/>
            <person name="Stevens C."/>
            <person name="Harley J."/>
            <person name="Holt K."/>
            <person name="Panagiotidis G."/>
            <person name="Lovell J."/>
            <person name="Beasley H."/>
            <person name="Henderson C."/>
            <person name="Gordon D."/>
            <person name="Auger K."/>
            <person name="Wright D."/>
            <person name="Collins J."/>
            <person name="Raisen C."/>
            <person name="Dyer L."/>
            <person name="Leung K."/>
            <person name="Robertson L."/>
            <person name="Ambridge K."/>
            <person name="Leongamornlert D."/>
            <person name="McGuire S."/>
            <person name="Gilderthorp R."/>
            <person name="Griffiths C."/>
            <person name="Manthravadi D."/>
            <person name="Nichol S."/>
            <person name="Barker G."/>
            <person name="Whitehead S."/>
            <person name="Kay M."/>
            <person name="Brown J."/>
            <person name="Murnane C."/>
            <person name="Gray E."/>
            <person name="Humphries M."/>
            <person name="Sycamore N."/>
            <person name="Barker D."/>
            <person name="Saunders D."/>
            <person name="Wallis J."/>
            <person name="Babbage A."/>
            <person name="Hammond S."/>
            <person name="Mashreghi-Mohammadi M."/>
            <person name="Barr L."/>
            <person name="Martin S."/>
            <person name="Wray P."/>
            <person name="Ellington A."/>
            <person name="Matthews N."/>
            <person name="Ellwood M."/>
            <person name="Woodmansey R."/>
            <person name="Clark G."/>
            <person name="Cooper J."/>
            <person name="Tromans A."/>
            <person name="Grafham D."/>
            <person name="Skuce C."/>
            <person name="Pandian R."/>
            <person name="Andrews R."/>
            <person name="Harrison E."/>
            <person name="Kimberley A."/>
            <person name="Garnett J."/>
            <person name="Fosker N."/>
            <person name="Hall R."/>
            <person name="Garner P."/>
            <person name="Kelly D."/>
            <person name="Bird C."/>
            <person name="Palmer S."/>
            <person name="Gehring I."/>
            <person name="Berger A."/>
            <person name="Dooley C.M."/>
            <person name="Ersan-Urun Z."/>
            <person name="Eser C."/>
            <person name="Geiger H."/>
            <person name="Geisler M."/>
            <person name="Karotki L."/>
            <person name="Kirn A."/>
            <person name="Konantz J."/>
            <person name="Konantz M."/>
            <person name="Oberlander M."/>
            <person name="Rudolph-Geiger S."/>
            <person name="Teucke M."/>
            <person name="Lanz C."/>
            <person name="Raddatz G."/>
            <person name="Osoegawa K."/>
            <person name="Zhu B."/>
            <person name="Rapp A."/>
            <person name="Widaa S."/>
            <person name="Langford C."/>
            <person name="Yang F."/>
            <person name="Schuster S.C."/>
            <person name="Carter N.P."/>
            <person name="Harrow J."/>
            <person name="Ning Z."/>
            <person name="Herrero J."/>
            <person name="Searle S.M."/>
            <person name="Enright A."/>
            <person name="Geisler R."/>
            <person name="Plasterk R.H."/>
            <person name="Lee C."/>
            <person name="Westerfield M."/>
            <person name="de Jong P.J."/>
            <person name="Zon L.I."/>
            <person name="Postlethwait J.H."/>
            <person name="Nusslein-Volhard C."/>
            <person name="Hubbard T.J."/>
            <person name="Roest Crollius H."/>
            <person name="Rogers J."/>
            <person name="Stemple D.L."/>
        </authorList>
    </citation>
    <scope>NUCLEOTIDE SEQUENCE [LARGE SCALE GENOMIC DNA]</scope>
    <source>
        <strain>Tuebingen</strain>
    </source>
</reference>
<reference evidence="6" key="3">
    <citation type="submission" date="2008-04" db="EMBL/GenBank/DDBJ databases">
        <authorList>
            <consortium name="NIH - Zebrafish Gene Collection (ZGC) project"/>
        </authorList>
    </citation>
    <scope>NUCLEOTIDE SEQUENCE [LARGE SCALE MRNA]</scope>
</reference>
<reference evidence="5" key="4">
    <citation type="journal article" date="2010" name="PLoS ONE">
        <title>Study of bioengineered zebra fish olfactory receptor 131-2: receptor purification and secondary structure analysis.</title>
        <authorList>
            <person name="Leck K.J."/>
            <person name="Zhang S."/>
            <person name="Hauser C.A."/>
        </authorList>
    </citation>
    <scope>SUBUNIT</scope>
    <scope>SUBCELLULAR LOCATION</scope>
</reference>
<protein>
    <recommendedName>
        <fullName evidence="5">Odorant receptor 131-2</fullName>
    </recommendedName>
    <alternativeName>
        <fullName evidence="9">Odorant receptor family H, subfamily 131, member 2</fullName>
    </alternativeName>
</protein>
<dbReference type="EMBL" id="DQ306116">
    <property type="protein sequence ID" value="ABC43356.1"/>
    <property type="molecule type" value="Genomic_DNA"/>
</dbReference>
<dbReference type="EMBL" id="CR388163">
    <property type="status" value="NOT_ANNOTATED_CDS"/>
    <property type="molecule type" value="Genomic_DNA"/>
</dbReference>
<dbReference type="EMBL" id="BC162686">
    <property type="protein sequence ID" value="AAI62686.1"/>
    <property type="molecule type" value="mRNA"/>
</dbReference>
<dbReference type="RefSeq" id="NP_001034727.1">
    <property type="nucleotide sequence ID" value="NM_001039638.1"/>
</dbReference>
<dbReference type="SMR" id="B3DH96"/>
<dbReference type="FunCoup" id="B3DH96">
    <property type="interactions" value="4"/>
</dbReference>
<dbReference type="GlyCosmos" id="B3DH96">
    <property type="glycosylation" value="2 sites, No reported glycans"/>
</dbReference>
<dbReference type="PaxDb" id="7955-ENSDARP00000100978"/>
<dbReference type="Ensembl" id="ENSDART00000109999">
    <property type="protein sequence ID" value="ENSDARP00000100978"/>
    <property type="gene ID" value="ENSDARG00000073812"/>
</dbReference>
<dbReference type="GeneID" id="569405"/>
<dbReference type="KEGG" id="dre:569405"/>
<dbReference type="AGR" id="ZFIN:ZDB-GENE-070806-46"/>
<dbReference type="CTD" id="569405"/>
<dbReference type="ZFIN" id="ZDB-GENE-070806-46">
    <property type="gene designation" value="or91a3"/>
</dbReference>
<dbReference type="eggNOG" id="KOG3656">
    <property type="taxonomic scope" value="Eukaryota"/>
</dbReference>
<dbReference type="InParanoid" id="B3DH96"/>
<dbReference type="OMA" id="FLIMSNA"/>
<dbReference type="OrthoDB" id="8759131at2759"/>
<dbReference type="PhylomeDB" id="B3DH96"/>
<dbReference type="TreeFam" id="TF332078"/>
<dbReference type="PRO" id="PR:B3DH96"/>
<dbReference type="Proteomes" id="UP000000437">
    <property type="component" value="Chromosome 15"/>
</dbReference>
<dbReference type="Bgee" id="ENSDARG00000073812">
    <property type="expression patterns" value="Expressed in nose epithelium and 1 other cell type or tissue"/>
</dbReference>
<dbReference type="GO" id="GO:0005737">
    <property type="term" value="C:cytoplasm"/>
    <property type="evidence" value="ECO:0007669"/>
    <property type="project" value="UniProtKB-SubCell"/>
</dbReference>
<dbReference type="GO" id="GO:0043231">
    <property type="term" value="C:intracellular membrane-bounded organelle"/>
    <property type="evidence" value="ECO:0000314"/>
    <property type="project" value="UniProtKB"/>
</dbReference>
<dbReference type="GO" id="GO:0016020">
    <property type="term" value="C:membrane"/>
    <property type="evidence" value="ECO:0000314"/>
    <property type="project" value="UniProtKB"/>
</dbReference>
<dbReference type="GO" id="GO:0005886">
    <property type="term" value="C:plasma membrane"/>
    <property type="evidence" value="ECO:0007669"/>
    <property type="project" value="UniProtKB-SubCell"/>
</dbReference>
<dbReference type="GO" id="GO:0004930">
    <property type="term" value="F:G protein-coupled receptor activity"/>
    <property type="evidence" value="ECO:0007669"/>
    <property type="project" value="UniProtKB-KW"/>
</dbReference>
<dbReference type="GO" id="GO:0005549">
    <property type="term" value="F:odorant binding"/>
    <property type="evidence" value="ECO:0000318"/>
    <property type="project" value="GO_Central"/>
</dbReference>
<dbReference type="GO" id="GO:0004984">
    <property type="term" value="F:olfactory receptor activity"/>
    <property type="evidence" value="ECO:0000318"/>
    <property type="project" value="GO_Central"/>
</dbReference>
<dbReference type="GO" id="GO:0042803">
    <property type="term" value="F:protein homodimerization activity"/>
    <property type="evidence" value="ECO:0000353"/>
    <property type="project" value="UniProtKB"/>
</dbReference>
<dbReference type="GO" id="GO:0050911">
    <property type="term" value="P:detection of chemical stimulus involved in sensory perception of smell"/>
    <property type="evidence" value="ECO:0000318"/>
    <property type="project" value="GO_Central"/>
</dbReference>
<dbReference type="CDD" id="cd00637">
    <property type="entry name" value="7tm_classA_rhodopsin-like"/>
    <property type="match status" value="1"/>
</dbReference>
<dbReference type="FunFam" id="1.20.1070.10:FF:000096">
    <property type="entry name" value="Odorant receptor 131-2"/>
    <property type="match status" value="1"/>
</dbReference>
<dbReference type="Gene3D" id="1.20.1070.10">
    <property type="entry name" value="Rhodopsin 7-helix transmembrane proteins"/>
    <property type="match status" value="1"/>
</dbReference>
<dbReference type="InterPro" id="IPR052921">
    <property type="entry name" value="GPCR1_Superfamily_Member"/>
</dbReference>
<dbReference type="InterPro" id="IPR000276">
    <property type="entry name" value="GPCR_Rhodpsn"/>
</dbReference>
<dbReference type="InterPro" id="IPR017452">
    <property type="entry name" value="GPCR_Rhodpsn_7TM"/>
</dbReference>
<dbReference type="PANTHER" id="PTHR26451">
    <property type="entry name" value="G_PROTEIN_RECEP_F1_2 DOMAIN-CONTAINING PROTEIN"/>
    <property type="match status" value="1"/>
</dbReference>
<dbReference type="PANTHER" id="PTHR26451:SF886">
    <property type="entry name" value="GROWTH HORMONE SECRETAGOGUE RECEPTOR TYPE 1-LIKE-RELATED"/>
    <property type="match status" value="1"/>
</dbReference>
<dbReference type="Pfam" id="PF00001">
    <property type="entry name" value="7tm_1"/>
    <property type="match status" value="1"/>
</dbReference>
<dbReference type="SUPFAM" id="SSF81321">
    <property type="entry name" value="Family A G protein-coupled receptor-like"/>
    <property type="match status" value="1"/>
</dbReference>
<dbReference type="PROSITE" id="PS50262">
    <property type="entry name" value="G_PROTEIN_RECEP_F1_2"/>
    <property type="match status" value="1"/>
</dbReference>
<name>O1312_DANRE</name>
<organism evidence="8">
    <name type="scientific">Danio rerio</name>
    <name type="common">Zebrafish</name>
    <name type="synonym">Brachydanio rerio</name>
    <dbReference type="NCBI Taxonomy" id="7955"/>
    <lineage>
        <taxon>Eukaryota</taxon>
        <taxon>Metazoa</taxon>
        <taxon>Chordata</taxon>
        <taxon>Craniata</taxon>
        <taxon>Vertebrata</taxon>
        <taxon>Euteleostomi</taxon>
        <taxon>Actinopterygii</taxon>
        <taxon>Neopterygii</taxon>
        <taxon>Teleostei</taxon>
        <taxon>Ostariophysi</taxon>
        <taxon>Cypriniformes</taxon>
        <taxon>Danionidae</taxon>
        <taxon>Danioninae</taxon>
        <taxon>Danio</taxon>
    </lineage>
</organism>
<feature type="chain" id="PRO_0000444303" description="Odorant receptor 131-2">
    <location>
        <begin position="1"/>
        <end position="325"/>
    </location>
</feature>
<feature type="topological domain" description="Extracellular" evidence="5">
    <location>
        <begin position="1"/>
        <end position="22"/>
    </location>
</feature>
<feature type="transmembrane region" description="Helical; Name=1" evidence="1">
    <location>
        <begin position="23"/>
        <end position="43"/>
    </location>
</feature>
<feature type="topological domain" description="Cytoplasmic" evidence="5">
    <location>
        <begin position="44"/>
        <end position="54"/>
    </location>
</feature>
<feature type="transmembrane region" description="Helical; Name=2" evidence="1">
    <location>
        <begin position="55"/>
        <end position="75"/>
    </location>
</feature>
<feature type="topological domain" description="Extracellular" evidence="5">
    <location>
        <begin position="76"/>
        <end position="91"/>
    </location>
</feature>
<feature type="transmembrane region" description="Helical; Name=3" evidence="1">
    <location>
        <begin position="92"/>
        <end position="112"/>
    </location>
</feature>
<feature type="topological domain" description="Cytoplasmic" evidence="5">
    <location>
        <begin position="113"/>
        <end position="135"/>
    </location>
</feature>
<feature type="transmembrane region" description="Helical; Name=4" evidence="1">
    <location>
        <begin position="136"/>
        <end position="156"/>
    </location>
</feature>
<feature type="topological domain" description="Extracellular" evidence="5">
    <location>
        <begin position="157"/>
        <end position="190"/>
    </location>
</feature>
<feature type="transmembrane region" description="Helical; Name=5" evidence="1">
    <location>
        <begin position="191"/>
        <end position="211"/>
    </location>
</feature>
<feature type="topological domain" description="Cytoplasmic" evidence="5">
    <location>
        <begin position="212"/>
        <end position="227"/>
    </location>
</feature>
<feature type="transmembrane region" description="Helical; Name=6" evidence="1">
    <location>
        <begin position="228"/>
        <end position="248"/>
    </location>
</feature>
<feature type="topological domain" description="Extracellular" evidence="5">
    <location>
        <begin position="249"/>
        <end position="267"/>
    </location>
</feature>
<feature type="transmembrane region" description="Helical; Name=7" evidence="1">
    <location>
        <begin position="268"/>
        <end position="285"/>
    </location>
</feature>
<feature type="topological domain" description="Cytoplasmic" evidence="5">
    <location>
        <begin position="286"/>
        <end position="325"/>
    </location>
</feature>
<feature type="glycosylation site" description="N-linked (GlcNAc...) asparagine" evidence="2">
    <location>
        <position position="2"/>
    </location>
</feature>
<feature type="glycosylation site" description="N-linked (GlcNAc...) asparagine" evidence="2">
    <location>
        <position position="6"/>
    </location>
</feature>
<feature type="disulfide bond" evidence="3">
    <location>
        <begin position="89"/>
        <end position="170"/>
    </location>
</feature>
<feature type="sequence conflict" description="In Ref. 1; ABC43356." evidence="5" ref="1">
    <original>C</original>
    <variation>Y</variation>
    <location>
        <position position="305"/>
    </location>
</feature>
<feature type="sequence conflict" description="In Ref. 1; ABC43356." evidence="5" ref="1">
    <original>R</original>
    <variation>G</variation>
    <location>
        <position position="317"/>
    </location>
</feature>
<feature type="sequence conflict" description="In Ref. 1; ABC43356." evidence="5" ref="1">
    <original>V</original>
    <variation>L</variation>
    <location>
        <position position="320"/>
    </location>
</feature>
<feature type="sequence conflict" description="In Ref. 1; ABC43356." evidence="5" ref="1">
    <original>A</original>
    <variation>S</variation>
    <location>
        <position position="323"/>
    </location>
</feature>
<feature type="sequence conflict" description="In Ref. 1; ABC43356." evidence="5" ref="1">
    <original>Y</original>
    <variation>HN</variation>
    <location>
        <position position="325"/>
    </location>
</feature>
<sequence length="325" mass="36713">MNSTSNSSLGNTFISKTLKEKSLTVQVLVGILLYVNGLMIFTFLKKETFRDTRYILFAQTLFVDSALMLFADLTLVGSAYELFIHIISCYIFCTVMALLSICSPVTLVAMCLERYVAICLPLRHASISSPKNTINGLLIIWGVSSVIPLFIFIVSFTYTPPNAMNSYVVCSNDVMFQVKWLAEMRALSQQLLFVIMLCIVGSTYIKIMVAAKSASAENKKSTYKGLRTVILHGLQLILGMMQLITPYIDILTLKVDIMLFINVKFSNFMLFWIFPRCLSPLVYGLRDKKFYNALKYYAFCGIYVCKKHKIKDSKTIRGAVSIAIY</sequence>